<keyword id="KW-0963">Cytoplasm</keyword>
<keyword id="KW-0460">Magnesium</keyword>
<keyword id="KW-0479">Metal-binding</keyword>
<keyword id="KW-0566">Pantothenate biosynthesis</keyword>
<keyword id="KW-0808">Transferase</keyword>
<protein>
    <recommendedName>
        <fullName evidence="1">3-methyl-2-oxobutanoate hydroxymethyltransferase</fullName>
        <ecNumber evidence="1">2.1.2.11</ecNumber>
    </recommendedName>
    <alternativeName>
        <fullName evidence="1">Ketopantoate hydroxymethyltransferase</fullName>
        <shortName evidence="1">KPHMT</shortName>
    </alternativeName>
</protein>
<evidence type="ECO:0000255" key="1">
    <source>
        <dbReference type="HAMAP-Rule" id="MF_00156"/>
    </source>
</evidence>
<comment type="function">
    <text evidence="1">Catalyzes the reversible reaction in which hydroxymethyl group from 5,10-methylenetetrahydrofolate is transferred onto alpha-ketoisovalerate to form ketopantoate.</text>
</comment>
<comment type="catalytic activity">
    <reaction evidence="1">
        <text>3-methyl-2-oxobutanoate + (6R)-5,10-methylene-5,6,7,8-tetrahydrofolate + H2O = 2-dehydropantoate + (6S)-5,6,7,8-tetrahydrofolate</text>
        <dbReference type="Rhea" id="RHEA:11824"/>
        <dbReference type="ChEBI" id="CHEBI:11561"/>
        <dbReference type="ChEBI" id="CHEBI:11851"/>
        <dbReference type="ChEBI" id="CHEBI:15377"/>
        <dbReference type="ChEBI" id="CHEBI:15636"/>
        <dbReference type="ChEBI" id="CHEBI:57453"/>
        <dbReference type="EC" id="2.1.2.11"/>
    </reaction>
</comment>
<comment type="cofactor">
    <cofactor evidence="1">
        <name>Mg(2+)</name>
        <dbReference type="ChEBI" id="CHEBI:18420"/>
    </cofactor>
    <text evidence="1">Binds 1 Mg(2+) ion per subunit.</text>
</comment>
<comment type="pathway">
    <text evidence="1">Cofactor biosynthesis; (R)-pantothenate biosynthesis; (R)-pantoate from 3-methyl-2-oxobutanoate: step 1/2.</text>
</comment>
<comment type="subunit">
    <text evidence="1">Homodecamer; pentamer of dimers.</text>
</comment>
<comment type="subcellular location">
    <subcellularLocation>
        <location evidence="1">Cytoplasm</location>
    </subcellularLocation>
</comment>
<comment type="similarity">
    <text evidence="1">Belongs to the PanB family.</text>
</comment>
<proteinExistence type="inferred from homology"/>
<name>PANB_FRATM</name>
<gene>
    <name evidence="1" type="primary">panB</name>
    <name type="ordered locus">FTM_0635</name>
</gene>
<organism>
    <name type="scientific">Francisella tularensis subsp. mediasiatica (strain FSC147)</name>
    <dbReference type="NCBI Taxonomy" id="441952"/>
    <lineage>
        <taxon>Bacteria</taxon>
        <taxon>Pseudomonadati</taxon>
        <taxon>Pseudomonadota</taxon>
        <taxon>Gammaproteobacteria</taxon>
        <taxon>Thiotrichales</taxon>
        <taxon>Francisellaceae</taxon>
        <taxon>Francisella</taxon>
    </lineage>
</organism>
<dbReference type="EC" id="2.1.2.11" evidence="1"/>
<dbReference type="EMBL" id="CP000915">
    <property type="protein sequence ID" value="ACD30622.1"/>
    <property type="molecule type" value="Genomic_DNA"/>
</dbReference>
<dbReference type="SMR" id="B2SFS9"/>
<dbReference type="KEGG" id="ftm:FTM_0635"/>
<dbReference type="HOGENOM" id="CLU_036645_1_0_6"/>
<dbReference type="UniPathway" id="UPA00028">
    <property type="reaction ID" value="UER00003"/>
</dbReference>
<dbReference type="GO" id="GO:0005737">
    <property type="term" value="C:cytoplasm"/>
    <property type="evidence" value="ECO:0007669"/>
    <property type="project" value="UniProtKB-SubCell"/>
</dbReference>
<dbReference type="GO" id="GO:0003864">
    <property type="term" value="F:3-methyl-2-oxobutanoate hydroxymethyltransferase activity"/>
    <property type="evidence" value="ECO:0007669"/>
    <property type="project" value="UniProtKB-UniRule"/>
</dbReference>
<dbReference type="GO" id="GO:0000287">
    <property type="term" value="F:magnesium ion binding"/>
    <property type="evidence" value="ECO:0007669"/>
    <property type="project" value="TreeGrafter"/>
</dbReference>
<dbReference type="GO" id="GO:0015940">
    <property type="term" value="P:pantothenate biosynthetic process"/>
    <property type="evidence" value="ECO:0007669"/>
    <property type="project" value="UniProtKB-UniRule"/>
</dbReference>
<dbReference type="CDD" id="cd06557">
    <property type="entry name" value="KPHMT-like"/>
    <property type="match status" value="1"/>
</dbReference>
<dbReference type="FunFam" id="3.20.20.60:FF:000003">
    <property type="entry name" value="3-methyl-2-oxobutanoate hydroxymethyltransferase"/>
    <property type="match status" value="1"/>
</dbReference>
<dbReference type="Gene3D" id="3.20.20.60">
    <property type="entry name" value="Phosphoenolpyruvate-binding domains"/>
    <property type="match status" value="1"/>
</dbReference>
<dbReference type="HAMAP" id="MF_00156">
    <property type="entry name" value="PanB"/>
    <property type="match status" value="1"/>
</dbReference>
<dbReference type="InterPro" id="IPR003700">
    <property type="entry name" value="Pantoate_hydroxy_MeTrfase"/>
</dbReference>
<dbReference type="InterPro" id="IPR015813">
    <property type="entry name" value="Pyrv/PenolPyrv_kinase-like_dom"/>
</dbReference>
<dbReference type="InterPro" id="IPR040442">
    <property type="entry name" value="Pyrv_kinase-like_dom_sf"/>
</dbReference>
<dbReference type="NCBIfam" id="TIGR00222">
    <property type="entry name" value="panB"/>
    <property type="match status" value="1"/>
</dbReference>
<dbReference type="NCBIfam" id="NF001452">
    <property type="entry name" value="PRK00311.1"/>
    <property type="match status" value="1"/>
</dbReference>
<dbReference type="PANTHER" id="PTHR20881">
    <property type="entry name" value="3-METHYL-2-OXOBUTANOATE HYDROXYMETHYLTRANSFERASE"/>
    <property type="match status" value="1"/>
</dbReference>
<dbReference type="PANTHER" id="PTHR20881:SF0">
    <property type="entry name" value="3-METHYL-2-OXOBUTANOATE HYDROXYMETHYLTRANSFERASE"/>
    <property type="match status" value="1"/>
</dbReference>
<dbReference type="Pfam" id="PF02548">
    <property type="entry name" value="Pantoate_transf"/>
    <property type="match status" value="1"/>
</dbReference>
<dbReference type="PIRSF" id="PIRSF000388">
    <property type="entry name" value="Pantoate_hydroxy_MeTrfase"/>
    <property type="match status" value="1"/>
</dbReference>
<dbReference type="SUPFAM" id="SSF51621">
    <property type="entry name" value="Phosphoenolpyruvate/pyruvate domain"/>
    <property type="match status" value="1"/>
</dbReference>
<sequence length="265" mass="28864">MKSVLGFKKAKVTQEKISMVTCYDYTLAKIINSTDIDCILVGDSGGMVLLGKKNTTYTTLDDMQFMTQAVANGATDKFIVADLPFMSYRQSLETTMQAVMALIQSGAHAIKLEGSSGNLDIIKHIVDSGVPVMGHIGMTPQFINSFGGFKVQGRTEEAAKHLLEEAKLLEQAGCFGIVLECIPANIAKDITQNLDIPTIGIGAGSNTDGQILVLQDMLGMNTDFQPKFVKKYIDGSKLFSDAINTYVKETKANTFPTKEHCYDYC</sequence>
<reference key="1">
    <citation type="journal article" date="2009" name="PLoS Pathog.">
        <title>Molecular evolutionary consequences of niche restriction in Francisella tularensis, a facultative intracellular pathogen.</title>
        <authorList>
            <person name="Larsson P."/>
            <person name="Elfsmark D."/>
            <person name="Svensson K."/>
            <person name="Wikstroem P."/>
            <person name="Forsman M."/>
            <person name="Brettin T."/>
            <person name="Keim P."/>
            <person name="Johansson A."/>
        </authorList>
    </citation>
    <scope>NUCLEOTIDE SEQUENCE [LARGE SCALE GENOMIC DNA]</scope>
    <source>
        <strain>FSC147</strain>
    </source>
</reference>
<accession>B2SFS9</accession>
<feature type="chain" id="PRO_1000096966" description="3-methyl-2-oxobutanoate hydroxymethyltransferase">
    <location>
        <begin position="1"/>
        <end position="265"/>
    </location>
</feature>
<feature type="active site" description="Proton acceptor" evidence="1">
    <location>
        <position position="180"/>
    </location>
</feature>
<feature type="binding site" evidence="1">
    <location>
        <begin position="43"/>
        <end position="44"/>
    </location>
    <ligand>
        <name>3-methyl-2-oxobutanoate</name>
        <dbReference type="ChEBI" id="CHEBI:11851"/>
    </ligand>
</feature>
<feature type="binding site" evidence="1">
    <location>
        <position position="43"/>
    </location>
    <ligand>
        <name>Mg(2+)</name>
        <dbReference type="ChEBI" id="CHEBI:18420"/>
    </ligand>
</feature>
<feature type="binding site" evidence="1">
    <location>
        <position position="82"/>
    </location>
    <ligand>
        <name>3-methyl-2-oxobutanoate</name>
        <dbReference type="ChEBI" id="CHEBI:11851"/>
    </ligand>
</feature>
<feature type="binding site" evidence="1">
    <location>
        <position position="82"/>
    </location>
    <ligand>
        <name>Mg(2+)</name>
        <dbReference type="ChEBI" id="CHEBI:18420"/>
    </ligand>
</feature>
<feature type="binding site" evidence="1">
    <location>
        <position position="111"/>
    </location>
    <ligand>
        <name>3-methyl-2-oxobutanoate</name>
        <dbReference type="ChEBI" id="CHEBI:11851"/>
    </ligand>
</feature>
<feature type="binding site" evidence="1">
    <location>
        <position position="113"/>
    </location>
    <ligand>
        <name>Mg(2+)</name>
        <dbReference type="ChEBI" id="CHEBI:18420"/>
    </ligand>
</feature>